<reference key="1">
    <citation type="journal article" date="2011" name="J. Bacteriol.">
        <title>Comparative genomics of 28 Salmonella enterica isolates: evidence for CRISPR-mediated adaptive sublineage evolution.</title>
        <authorList>
            <person name="Fricke W.F."/>
            <person name="Mammel M.K."/>
            <person name="McDermott P.F."/>
            <person name="Tartera C."/>
            <person name="White D.G."/>
            <person name="Leclerc J.E."/>
            <person name="Ravel J."/>
            <person name="Cebula T.A."/>
        </authorList>
    </citation>
    <scope>NUCLEOTIDE SEQUENCE [LARGE SCALE GENOMIC DNA]</scope>
    <source>
        <strain>SL254</strain>
    </source>
</reference>
<gene>
    <name evidence="1" type="primary">gppA</name>
    <name type="ordered locus">SNSL254_A4194</name>
</gene>
<name>GPPA_SALNS</name>
<accession>B4SZ25</accession>
<dbReference type="EC" id="3.6.1.40" evidence="1"/>
<dbReference type="EMBL" id="CP001113">
    <property type="protein sequence ID" value="ACF63177.1"/>
    <property type="molecule type" value="Genomic_DNA"/>
</dbReference>
<dbReference type="RefSeq" id="WP_001089447.1">
    <property type="nucleotide sequence ID" value="NZ_CCMR01000001.1"/>
</dbReference>
<dbReference type="SMR" id="B4SZ25"/>
<dbReference type="KEGG" id="see:SNSL254_A4194"/>
<dbReference type="HOGENOM" id="CLU_025908_4_0_6"/>
<dbReference type="UniPathway" id="UPA00908">
    <property type="reaction ID" value="UER00885"/>
</dbReference>
<dbReference type="Proteomes" id="UP000008824">
    <property type="component" value="Chromosome"/>
</dbReference>
<dbReference type="GO" id="GO:0008894">
    <property type="term" value="F:guanosine-5'-triphosphate,3'-diphosphate diphosphatase activity"/>
    <property type="evidence" value="ECO:0007669"/>
    <property type="project" value="UniProtKB-UniRule"/>
</dbReference>
<dbReference type="GO" id="GO:0015974">
    <property type="term" value="P:guanosine pentaphosphate catabolic process"/>
    <property type="evidence" value="ECO:0007669"/>
    <property type="project" value="InterPro"/>
</dbReference>
<dbReference type="GO" id="GO:0015970">
    <property type="term" value="P:guanosine tetraphosphate biosynthetic process"/>
    <property type="evidence" value="ECO:0007669"/>
    <property type="project" value="UniProtKB-UniRule"/>
</dbReference>
<dbReference type="GO" id="GO:0015949">
    <property type="term" value="P:nucleobase-containing small molecule interconversion"/>
    <property type="evidence" value="ECO:0007669"/>
    <property type="project" value="TreeGrafter"/>
</dbReference>
<dbReference type="CDD" id="cd24117">
    <property type="entry name" value="ASKHA_NBD_EcGppA-like"/>
    <property type="match status" value="1"/>
</dbReference>
<dbReference type="FunFam" id="1.10.3210.10:FF:000004">
    <property type="entry name" value="Guanosine-5'-triphosphate,3'-diphosphate pyrophosphatase"/>
    <property type="match status" value="1"/>
</dbReference>
<dbReference type="FunFam" id="3.30.420.150:FF:000001">
    <property type="entry name" value="Guanosine-5'-triphosphate,3'-diphosphate pyrophosphatase"/>
    <property type="match status" value="1"/>
</dbReference>
<dbReference type="FunFam" id="3.30.420.40:FF:000023">
    <property type="entry name" value="Guanosine-5'-triphosphate,3'-diphosphate pyrophosphatase"/>
    <property type="match status" value="1"/>
</dbReference>
<dbReference type="Gene3D" id="3.30.420.40">
    <property type="match status" value="1"/>
</dbReference>
<dbReference type="Gene3D" id="3.30.420.150">
    <property type="entry name" value="Exopolyphosphatase. Domain 2"/>
    <property type="match status" value="1"/>
</dbReference>
<dbReference type="Gene3D" id="1.10.3210.10">
    <property type="entry name" value="Hypothetical protein af1432"/>
    <property type="match status" value="1"/>
</dbReference>
<dbReference type="HAMAP" id="MF_01550">
    <property type="entry name" value="GppA"/>
    <property type="match status" value="1"/>
</dbReference>
<dbReference type="InterPro" id="IPR043129">
    <property type="entry name" value="ATPase_NBD"/>
</dbReference>
<dbReference type="InterPro" id="IPR050273">
    <property type="entry name" value="GppA/Ppx_hydrolase"/>
</dbReference>
<dbReference type="InterPro" id="IPR023709">
    <property type="entry name" value="Guo-5TP_3DP_PyrP"/>
</dbReference>
<dbReference type="InterPro" id="IPR048950">
    <property type="entry name" value="Ppx_GppA_C"/>
</dbReference>
<dbReference type="InterPro" id="IPR003695">
    <property type="entry name" value="Ppx_GppA_N"/>
</dbReference>
<dbReference type="InterPro" id="IPR030673">
    <property type="entry name" value="PyroPPase_GppA_Ppx"/>
</dbReference>
<dbReference type="NCBIfam" id="NF008260">
    <property type="entry name" value="PRK11031.1"/>
    <property type="match status" value="1"/>
</dbReference>
<dbReference type="PANTHER" id="PTHR30005">
    <property type="entry name" value="EXOPOLYPHOSPHATASE"/>
    <property type="match status" value="1"/>
</dbReference>
<dbReference type="PANTHER" id="PTHR30005:SF0">
    <property type="entry name" value="RETROGRADE REGULATION PROTEIN 2"/>
    <property type="match status" value="1"/>
</dbReference>
<dbReference type="Pfam" id="PF02541">
    <property type="entry name" value="Ppx-GppA"/>
    <property type="match status" value="1"/>
</dbReference>
<dbReference type="Pfam" id="PF21447">
    <property type="entry name" value="Ppx-GppA_III"/>
    <property type="match status" value="1"/>
</dbReference>
<dbReference type="PIRSF" id="PIRSF001267">
    <property type="entry name" value="Pyrophosphatase_GppA_Ppx"/>
    <property type="match status" value="1"/>
</dbReference>
<dbReference type="SUPFAM" id="SSF53067">
    <property type="entry name" value="Actin-like ATPase domain"/>
    <property type="match status" value="2"/>
</dbReference>
<dbReference type="SUPFAM" id="SSF109604">
    <property type="entry name" value="HD-domain/PDEase-like"/>
    <property type="match status" value="1"/>
</dbReference>
<protein>
    <recommendedName>
        <fullName evidence="1">Guanosine-5'-triphosphate,3'-diphosphate pyrophosphatase</fullName>
        <ecNumber evidence="1">3.6.1.40</ecNumber>
    </recommendedName>
    <alternativeName>
        <fullName evidence="1">Guanosine pentaphosphate phosphohydrolase</fullName>
    </alternativeName>
    <alternativeName>
        <fullName evidence="1">pppGpp-5'-phosphohydrolase</fullName>
    </alternativeName>
</protein>
<feature type="chain" id="PRO_1000192537" description="Guanosine-5'-triphosphate,3'-diphosphate pyrophosphatase">
    <location>
        <begin position="1"/>
        <end position="493"/>
    </location>
</feature>
<comment type="function">
    <text evidence="1">Catalyzes the conversion of pppGpp to ppGpp. Guanosine pentaphosphate (pppGpp) is a cytoplasmic signaling molecule which together with ppGpp controls the 'stringent response', an adaptive process that allows bacteria to respond to amino acid starvation, resulting in the coordinated regulation of numerous cellular activities.</text>
</comment>
<comment type="catalytic activity">
    <reaction evidence="1">
        <text>guanosine 3'-diphosphate 5'-triphosphate + H2O = guanosine 3',5'-bis(diphosphate) + phosphate + H(+)</text>
        <dbReference type="Rhea" id="RHEA:13073"/>
        <dbReference type="ChEBI" id="CHEBI:15377"/>
        <dbReference type="ChEBI" id="CHEBI:15378"/>
        <dbReference type="ChEBI" id="CHEBI:43474"/>
        <dbReference type="ChEBI" id="CHEBI:77828"/>
        <dbReference type="ChEBI" id="CHEBI:142410"/>
        <dbReference type="EC" id="3.6.1.40"/>
    </reaction>
</comment>
<comment type="pathway">
    <text evidence="1">Purine metabolism; ppGpp biosynthesis; ppGpp from GTP: step 2/2.</text>
</comment>
<comment type="similarity">
    <text evidence="1">Belongs to the GppA/Ppx family. GppA subfamily.</text>
</comment>
<proteinExistence type="inferred from homology"/>
<evidence type="ECO:0000255" key="1">
    <source>
        <dbReference type="HAMAP-Rule" id="MF_01550"/>
    </source>
</evidence>
<sequence length="493" mass="54816">MNSTSLYAAIDLGSNSFHMLVVREAAGSIQTLTRIKRKVRLAAGLNNDNHLSAEAMERGWQCLRLFAERLQDIPQPQIRVVATATLRLAVNAGEFIAKAQTILGCPVQVISGEEEARLIYQGVAHTTGGADQRLVVDIGGASTELVTGTGAQTTSLFSLSMGCVTWLERYFSDRNLAQENFDDAEKAARDVLRPVADELRFHGWKVCVGASGTVQALQEIMMAQGMDERITLAKLQQLKQRAIQCGRLEELEIEGLTLERALVFPSGLAILIAIFTELNIQSMTLAGGALREGLVYGMLHLAVDQDIRSRTLRNIQRRFIVDTDQANRVAKLADNFLKQVENAWHIEPISRELLLSACQLHEIGLSVDFKQAPYHAAYLVRHLDLPGYTPAQKKLLATLLLNQTNPVDLSSLHQQNAVPPRVAEQLCRLLRLAILFAGRRRDDLVPEITLQALNENLTLTLPGDWLAHHPLGKELIDQESQWQSYVHWPLDVR</sequence>
<organism>
    <name type="scientific">Salmonella newport (strain SL254)</name>
    <dbReference type="NCBI Taxonomy" id="423368"/>
    <lineage>
        <taxon>Bacteria</taxon>
        <taxon>Pseudomonadati</taxon>
        <taxon>Pseudomonadota</taxon>
        <taxon>Gammaproteobacteria</taxon>
        <taxon>Enterobacterales</taxon>
        <taxon>Enterobacteriaceae</taxon>
        <taxon>Salmonella</taxon>
    </lineage>
</organism>
<keyword id="KW-0378">Hydrolase</keyword>